<accession>Q31UN7</accession>
<comment type="function">
    <text evidence="1">F(1)F(0) ATP synthase produces ATP from ADP in the presence of a proton or sodium gradient. F-type ATPases consist of two structural domains, F(1) containing the extramembraneous catalytic core and F(0) containing the membrane proton channel, linked together by a central stalk and a peripheral stalk. During catalysis, ATP synthesis in the catalytic domain of F(1) is coupled via a rotary mechanism of the central stalk subunits to proton translocation.</text>
</comment>
<comment type="function">
    <text evidence="1">Key component of the F(0) channel; it plays a direct role in translocation across the membrane. A homomeric c-ring of between 10-14 subunits forms the central stalk rotor element with the F(1) delta and epsilon subunits.</text>
</comment>
<comment type="subunit">
    <text evidence="1">F-type ATPases have 2 components, F(1) - the catalytic core - and F(0) - the membrane proton channel. F(1) has five subunits: alpha(3), beta(3), gamma(1), delta(1), epsilon(1). F(0) has three main subunits: a(1), b(2) and c(10-14). The alpha and beta chains form an alternating ring which encloses part of the gamma chain. F(1) is attached to F(0) by a central stalk formed by the gamma and epsilon chains, while a peripheral stalk is formed by the delta and b chains.</text>
</comment>
<comment type="subcellular location">
    <subcellularLocation>
        <location evidence="1">Cell inner membrane</location>
        <topology evidence="1">Multi-pass membrane protein</topology>
    </subcellularLocation>
</comment>
<comment type="similarity">
    <text evidence="1">Belongs to the ATPase C chain family.</text>
</comment>
<feature type="chain" id="PRO_1000184486" description="ATP synthase subunit c">
    <location>
        <begin position="1"/>
        <end position="79"/>
    </location>
</feature>
<feature type="transmembrane region" description="Helical" evidence="1">
    <location>
        <begin position="11"/>
        <end position="31"/>
    </location>
</feature>
<feature type="transmembrane region" description="Helical" evidence="1">
    <location>
        <begin position="53"/>
        <end position="73"/>
    </location>
</feature>
<feature type="site" description="Reversibly protonated during proton transport" evidence="1">
    <location>
        <position position="61"/>
    </location>
</feature>
<protein>
    <recommendedName>
        <fullName evidence="1">ATP synthase subunit c</fullName>
    </recommendedName>
    <alternativeName>
        <fullName evidence="1">ATP synthase F(0) sector subunit c</fullName>
    </alternativeName>
    <alternativeName>
        <fullName evidence="1">F-type ATPase subunit c</fullName>
        <shortName evidence="1">F-ATPase subunit c</shortName>
    </alternativeName>
    <alternativeName>
        <fullName evidence="1">Lipid-binding protein</fullName>
    </alternativeName>
</protein>
<keyword id="KW-0066">ATP synthesis</keyword>
<keyword id="KW-0997">Cell inner membrane</keyword>
<keyword id="KW-1003">Cell membrane</keyword>
<keyword id="KW-0138">CF(0)</keyword>
<keyword id="KW-0375">Hydrogen ion transport</keyword>
<keyword id="KW-0406">Ion transport</keyword>
<keyword id="KW-0446">Lipid-binding</keyword>
<keyword id="KW-0472">Membrane</keyword>
<keyword id="KW-0812">Transmembrane</keyword>
<keyword id="KW-1133">Transmembrane helix</keyword>
<keyword id="KW-0813">Transport</keyword>
<sequence length="79" mass="8256">MENLNMDLLYMAAAVMMGLAAIGAAIGIGILGGKFLEGAARQPDLIPLLRTQFFIVMGLVDAIPMIAVGLGLYVMFAVA</sequence>
<proteinExistence type="inferred from homology"/>
<reference key="1">
    <citation type="journal article" date="2005" name="Nucleic Acids Res.">
        <title>Genome dynamics and diversity of Shigella species, the etiologic agents of bacillary dysentery.</title>
        <authorList>
            <person name="Yang F."/>
            <person name="Yang J."/>
            <person name="Zhang X."/>
            <person name="Chen L."/>
            <person name="Jiang Y."/>
            <person name="Yan Y."/>
            <person name="Tang X."/>
            <person name="Wang J."/>
            <person name="Xiong Z."/>
            <person name="Dong J."/>
            <person name="Xue Y."/>
            <person name="Zhu Y."/>
            <person name="Xu X."/>
            <person name="Sun L."/>
            <person name="Chen S."/>
            <person name="Nie H."/>
            <person name="Peng J."/>
            <person name="Xu J."/>
            <person name="Wang Y."/>
            <person name="Yuan Z."/>
            <person name="Wen Y."/>
            <person name="Yao Z."/>
            <person name="Shen Y."/>
            <person name="Qiang B."/>
            <person name="Hou Y."/>
            <person name="Yu J."/>
            <person name="Jin Q."/>
        </authorList>
    </citation>
    <scope>NUCLEOTIDE SEQUENCE [LARGE SCALE GENOMIC DNA]</scope>
    <source>
        <strain>Sb227</strain>
    </source>
</reference>
<dbReference type="EMBL" id="CP000036">
    <property type="protein sequence ID" value="ABB68221.1"/>
    <property type="molecule type" value="Genomic_DNA"/>
</dbReference>
<dbReference type="RefSeq" id="WP_000429386.1">
    <property type="nucleotide sequence ID" value="NC_007613.1"/>
</dbReference>
<dbReference type="SMR" id="Q31UN7"/>
<dbReference type="GeneID" id="98390858"/>
<dbReference type="KEGG" id="sbo:SBO_3750"/>
<dbReference type="HOGENOM" id="CLU_148047_1_0_6"/>
<dbReference type="Proteomes" id="UP000007067">
    <property type="component" value="Chromosome"/>
</dbReference>
<dbReference type="GO" id="GO:0005886">
    <property type="term" value="C:plasma membrane"/>
    <property type="evidence" value="ECO:0007669"/>
    <property type="project" value="UniProtKB-SubCell"/>
</dbReference>
<dbReference type="GO" id="GO:0045259">
    <property type="term" value="C:proton-transporting ATP synthase complex"/>
    <property type="evidence" value="ECO:0007669"/>
    <property type="project" value="UniProtKB-KW"/>
</dbReference>
<dbReference type="GO" id="GO:0033177">
    <property type="term" value="C:proton-transporting two-sector ATPase complex, proton-transporting domain"/>
    <property type="evidence" value="ECO:0007669"/>
    <property type="project" value="InterPro"/>
</dbReference>
<dbReference type="GO" id="GO:0008289">
    <property type="term" value="F:lipid binding"/>
    <property type="evidence" value="ECO:0007669"/>
    <property type="project" value="UniProtKB-KW"/>
</dbReference>
<dbReference type="GO" id="GO:0046933">
    <property type="term" value="F:proton-transporting ATP synthase activity, rotational mechanism"/>
    <property type="evidence" value="ECO:0007669"/>
    <property type="project" value="UniProtKB-UniRule"/>
</dbReference>
<dbReference type="CDD" id="cd18185">
    <property type="entry name" value="ATP-synt_Fo_c_ATPE"/>
    <property type="match status" value="1"/>
</dbReference>
<dbReference type="FunFam" id="1.20.20.10:FF:000002">
    <property type="entry name" value="ATP synthase subunit c"/>
    <property type="match status" value="1"/>
</dbReference>
<dbReference type="Gene3D" id="1.20.20.10">
    <property type="entry name" value="F1F0 ATP synthase subunit C"/>
    <property type="match status" value="1"/>
</dbReference>
<dbReference type="HAMAP" id="MF_01396">
    <property type="entry name" value="ATP_synth_c_bact"/>
    <property type="match status" value="1"/>
</dbReference>
<dbReference type="InterPro" id="IPR005953">
    <property type="entry name" value="ATP_synth_csu_bac/chlpt"/>
</dbReference>
<dbReference type="InterPro" id="IPR000454">
    <property type="entry name" value="ATP_synth_F0_csu"/>
</dbReference>
<dbReference type="InterPro" id="IPR020537">
    <property type="entry name" value="ATP_synth_F0_csu_DDCD_BS"/>
</dbReference>
<dbReference type="InterPro" id="IPR038662">
    <property type="entry name" value="ATP_synth_F0_csu_sf"/>
</dbReference>
<dbReference type="InterPro" id="IPR002379">
    <property type="entry name" value="ATPase_proteolipid_c-like_dom"/>
</dbReference>
<dbReference type="InterPro" id="IPR035921">
    <property type="entry name" value="F/V-ATP_Csub_sf"/>
</dbReference>
<dbReference type="NCBIfam" id="TIGR01260">
    <property type="entry name" value="ATP_synt_c"/>
    <property type="match status" value="1"/>
</dbReference>
<dbReference type="NCBIfam" id="NF005363">
    <property type="entry name" value="PRK06876.1"/>
    <property type="match status" value="1"/>
</dbReference>
<dbReference type="Pfam" id="PF00137">
    <property type="entry name" value="ATP-synt_C"/>
    <property type="match status" value="1"/>
</dbReference>
<dbReference type="PRINTS" id="PR00124">
    <property type="entry name" value="ATPASEC"/>
</dbReference>
<dbReference type="SUPFAM" id="SSF81333">
    <property type="entry name" value="F1F0 ATP synthase subunit C"/>
    <property type="match status" value="1"/>
</dbReference>
<dbReference type="PROSITE" id="PS00605">
    <property type="entry name" value="ATPASE_C"/>
    <property type="match status" value="1"/>
</dbReference>
<evidence type="ECO:0000255" key="1">
    <source>
        <dbReference type="HAMAP-Rule" id="MF_01396"/>
    </source>
</evidence>
<name>ATPL_SHIBS</name>
<gene>
    <name evidence="1" type="primary">atpE</name>
    <name type="ordered locus">SBO_3750</name>
</gene>
<organism>
    <name type="scientific">Shigella boydii serotype 4 (strain Sb227)</name>
    <dbReference type="NCBI Taxonomy" id="300268"/>
    <lineage>
        <taxon>Bacteria</taxon>
        <taxon>Pseudomonadati</taxon>
        <taxon>Pseudomonadota</taxon>
        <taxon>Gammaproteobacteria</taxon>
        <taxon>Enterobacterales</taxon>
        <taxon>Enterobacteriaceae</taxon>
        <taxon>Shigella</taxon>
    </lineage>
</organism>